<protein>
    <recommendedName>
        <fullName evidence="1">Probable tRNA sulfurtransferase</fullName>
        <ecNumber evidence="1">2.8.1.4</ecNumber>
    </recommendedName>
    <alternativeName>
        <fullName evidence="1">Sulfur carrier protein ThiS sulfurtransferase</fullName>
    </alternativeName>
    <alternativeName>
        <fullName evidence="1">Thiamine biosynthesis protein ThiI</fullName>
    </alternativeName>
    <alternativeName>
        <fullName evidence="1">tRNA 4-thiouridine synthase</fullName>
    </alternativeName>
</protein>
<name>THII_LIMF3</name>
<comment type="function">
    <text evidence="1">Catalyzes the ATP-dependent transfer of a sulfur to tRNA to produce 4-thiouridine in position 8 of tRNAs, which functions as a near-UV photosensor. Also catalyzes the transfer of sulfur to the sulfur carrier protein ThiS, forming ThiS-thiocarboxylate. This is a step in the synthesis of thiazole, in the thiamine biosynthesis pathway. The sulfur is donated as persulfide by IscS.</text>
</comment>
<comment type="catalytic activity">
    <reaction evidence="1">
        <text>[ThiI sulfur-carrier protein]-S-sulfanyl-L-cysteine + a uridine in tRNA + 2 reduced [2Fe-2S]-[ferredoxin] + ATP + H(+) = [ThiI sulfur-carrier protein]-L-cysteine + a 4-thiouridine in tRNA + 2 oxidized [2Fe-2S]-[ferredoxin] + AMP + diphosphate</text>
        <dbReference type="Rhea" id="RHEA:24176"/>
        <dbReference type="Rhea" id="RHEA-COMP:10000"/>
        <dbReference type="Rhea" id="RHEA-COMP:10001"/>
        <dbReference type="Rhea" id="RHEA-COMP:13337"/>
        <dbReference type="Rhea" id="RHEA-COMP:13338"/>
        <dbReference type="Rhea" id="RHEA-COMP:13339"/>
        <dbReference type="Rhea" id="RHEA-COMP:13340"/>
        <dbReference type="ChEBI" id="CHEBI:15378"/>
        <dbReference type="ChEBI" id="CHEBI:29950"/>
        <dbReference type="ChEBI" id="CHEBI:30616"/>
        <dbReference type="ChEBI" id="CHEBI:33019"/>
        <dbReference type="ChEBI" id="CHEBI:33737"/>
        <dbReference type="ChEBI" id="CHEBI:33738"/>
        <dbReference type="ChEBI" id="CHEBI:61963"/>
        <dbReference type="ChEBI" id="CHEBI:65315"/>
        <dbReference type="ChEBI" id="CHEBI:136798"/>
        <dbReference type="ChEBI" id="CHEBI:456215"/>
        <dbReference type="EC" id="2.8.1.4"/>
    </reaction>
</comment>
<comment type="catalytic activity">
    <reaction evidence="1">
        <text>[ThiS sulfur-carrier protein]-C-terminal Gly-Gly-AMP + S-sulfanyl-L-cysteinyl-[cysteine desulfurase] + AH2 = [ThiS sulfur-carrier protein]-C-terminal-Gly-aminoethanethioate + L-cysteinyl-[cysteine desulfurase] + A + AMP + 2 H(+)</text>
        <dbReference type="Rhea" id="RHEA:43340"/>
        <dbReference type="Rhea" id="RHEA-COMP:12157"/>
        <dbReference type="Rhea" id="RHEA-COMP:12158"/>
        <dbReference type="Rhea" id="RHEA-COMP:12910"/>
        <dbReference type="Rhea" id="RHEA-COMP:19908"/>
        <dbReference type="ChEBI" id="CHEBI:13193"/>
        <dbReference type="ChEBI" id="CHEBI:15378"/>
        <dbReference type="ChEBI" id="CHEBI:17499"/>
        <dbReference type="ChEBI" id="CHEBI:29950"/>
        <dbReference type="ChEBI" id="CHEBI:61963"/>
        <dbReference type="ChEBI" id="CHEBI:90618"/>
        <dbReference type="ChEBI" id="CHEBI:232372"/>
        <dbReference type="ChEBI" id="CHEBI:456215"/>
    </reaction>
</comment>
<comment type="pathway">
    <text evidence="1">Cofactor biosynthesis; thiamine diphosphate biosynthesis.</text>
</comment>
<comment type="subcellular location">
    <subcellularLocation>
        <location evidence="1">Cytoplasm</location>
    </subcellularLocation>
</comment>
<comment type="similarity">
    <text evidence="1">Belongs to the ThiI family.</text>
</comment>
<dbReference type="EC" id="2.8.1.4" evidence="1"/>
<dbReference type="EMBL" id="AP008937">
    <property type="protein sequence ID" value="BAG26826.1"/>
    <property type="molecule type" value="Genomic_DNA"/>
</dbReference>
<dbReference type="RefSeq" id="WP_003682780.1">
    <property type="nucleotide sequence ID" value="NC_010610.1"/>
</dbReference>
<dbReference type="SMR" id="B2GAZ4"/>
<dbReference type="GeneID" id="83715203"/>
<dbReference type="KEGG" id="lfe:LAF_0490"/>
<dbReference type="eggNOG" id="COG0301">
    <property type="taxonomic scope" value="Bacteria"/>
</dbReference>
<dbReference type="HOGENOM" id="CLU_037952_4_0_9"/>
<dbReference type="UniPathway" id="UPA00060"/>
<dbReference type="Proteomes" id="UP000001697">
    <property type="component" value="Chromosome"/>
</dbReference>
<dbReference type="GO" id="GO:0005829">
    <property type="term" value="C:cytosol"/>
    <property type="evidence" value="ECO:0007669"/>
    <property type="project" value="TreeGrafter"/>
</dbReference>
<dbReference type="GO" id="GO:0005524">
    <property type="term" value="F:ATP binding"/>
    <property type="evidence" value="ECO:0007669"/>
    <property type="project" value="UniProtKB-UniRule"/>
</dbReference>
<dbReference type="GO" id="GO:0004810">
    <property type="term" value="F:CCA tRNA nucleotidyltransferase activity"/>
    <property type="evidence" value="ECO:0007669"/>
    <property type="project" value="InterPro"/>
</dbReference>
<dbReference type="GO" id="GO:0000049">
    <property type="term" value="F:tRNA binding"/>
    <property type="evidence" value="ECO:0007669"/>
    <property type="project" value="UniProtKB-UniRule"/>
</dbReference>
<dbReference type="GO" id="GO:0140741">
    <property type="term" value="F:tRNA-uracil-4 sulfurtransferase activity"/>
    <property type="evidence" value="ECO:0007669"/>
    <property type="project" value="UniProtKB-EC"/>
</dbReference>
<dbReference type="GO" id="GO:0009228">
    <property type="term" value="P:thiamine biosynthetic process"/>
    <property type="evidence" value="ECO:0007669"/>
    <property type="project" value="UniProtKB-KW"/>
</dbReference>
<dbReference type="GO" id="GO:0009229">
    <property type="term" value="P:thiamine diphosphate biosynthetic process"/>
    <property type="evidence" value="ECO:0007669"/>
    <property type="project" value="UniProtKB-UniRule"/>
</dbReference>
<dbReference type="GO" id="GO:0052837">
    <property type="term" value="P:thiazole biosynthetic process"/>
    <property type="evidence" value="ECO:0007669"/>
    <property type="project" value="TreeGrafter"/>
</dbReference>
<dbReference type="GO" id="GO:0002937">
    <property type="term" value="P:tRNA 4-thiouridine biosynthesis"/>
    <property type="evidence" value="ECO:0007669"/>
    <property type="project" value="TreeGrafter"/>
</dbReference>
<dbReference type="CDD" id="cd01712">
    <property type="entry name" value="PPase_ThiI"/>
    <property type="match status" value="1"/>
</dbReference>
<dbReference type="CDD" id="cd11716">
    <property type="entry name" value="THUMP_ThiI"/>
    <property type="match status" value="1"/>
</dbReference>
<dbReference type="FunFam" id="3.40.50.620:FF:000053">
    <property type="entry name" value="Probable tRNA sulfurtransferase"/>
    <property type="match status" value="1"/>
</dbReference>
<dbReference type="Gene3D" id="3.30.2130.30">
    <property type="match status" value="1"/>
</dbReference>
<dbReference type="Gene3D" id="3.40.50.620">
    <property type="entry name" value="HUPs"/>
    <property type="match status" value="1"/>
</dbReference>
<dbReference type="HAMAP" id="MF_00021">
    <property type="entry name" value="ThiI"/>
    <property type="match status" value="1"/>
</dbReference>
<dbReference type="InterPro" id="IPR014729">
    <property type="entry name" value="Rossmann-like_a/b/a_fold"/>
</dbReference>
<dbReference type="InterPro" id="IPR020536">
    <property type="entry name" value="ThiI_AANH"/>
</dbReference>
<dbReference type="InterPro" id="IPR054173">
    <property type="entry name" value="ThiI_fer"/>
</dbReference>
<dbReference type="InterPro" id="IPR049961">
    <property type="entry name" value="ThiI_N"/>
</dbReference>
<dbReference type="InterPro" id="IPR004114">
    <property type="entry name" value="THUMP_dom"/>
</dbReference>
<dbReference type="InterPro" id="IPR049962">
    <property type="entry name" value="THUMP_ThiI"/>
</dbReference>
<dbReference type="InterPro" id="IPR003720">
    <property type="entry name" value="tRNA_STrfase"/>
</dbReference>
<dbReference type="InterPro" id="IPR050102">
    <property type="entry name" value="tRNA_sulfurtransferase_ThiI"/>
</dbReference>
<dbReference type="NCBIfam" id="TIGR00342">
    <property type="entry name" value="tRNA uracil 4-sulfurtransferase ThiI"/>
    <property type="match status" value="1"/>
</dbReference>
<dbReference type="PANTHER" id="PTHR43209">
    <property type="entry name" value="TRNA SULFURTRANSFERASE"/>
    <property type="match status" value="1"/>
</dbReference>
<dbReference type="PANTHER" id="PTHR43209:SF1">
    <property type="entry name" value="TRNA SULFURTRANSFERASE"/>
    <property type="match status" value="1"/>
</dbReference>
<dbReference type="Pfam" id="PF02568">
    <property type="entry name" value="ThiI"/>
    <property type="match status" value="1"/>
</dbReference>
<dbReference type="Pfam" id="PF22025">
    <property type="entry name" value="ThiI_fer"/>
    <property type="match status" value="1"/>
</dbReference>
<dbReference type="Pfam" id="PF02926">
    <property type="entry name" value="THUMP"/>
    <property type="match status" value="1"/>
</dbReference>
<dbReference type="SMART" id="SM00981">
    <property type="entry name" value="THUMP"/>
    <property type="match status" value="1"/>
</dbReference>
<dbReference type="SUPFAM" id="SSF52402">
    <property type="entry name" value="Adenine nucleotide alpha hydrolases-like"/>
    <property type="match status" value="1"/>
</dbReference>
<dbReference type="SUPFAM" id="SSF143437">
    <property type="entry name" value="THUMP domain-like"/>
    <property type="match status" value="1"/>
</dbReference>
<dbReference type="PROSITE" id="PS51165">
    <property type="entry name" value="THUMP"/>
    <property type="match status" value="1"/>
</dbReference>
<organism>
    <name type="scientific">Limosilactobacillus fermentum (strain NBRC 3956 / LMG 18251)</name>
    <name type="common">Lactobacillus fermentum</name>
    <dbReference type="NCBI Taxonomy" id="334390"/>
    <lineage>
        <taxon>Bacteria</taxon>
        <taxon>Bacillati</taxon>
        <taxon>Bacillota</taxon>
        <taxon>Bacilli</taxon>
        <taxon>Lactobacillales</taxon>
        <taxon>Lactobacillaceae</taxon>
        <taxon>Limosilactobacillus</taxon>
    </lineage>
</organism>
<gene>
    <name evidence="1" type="primary">thiI</name>
    <name type="ordered locus">LAF_0490</name>
</gene>
<keyword id="KW-0067">ATP-binding</keyword>
<keyword id="KW-0963">Cytoplasm</keyword>
<keyword id="KW-0547">Nucleotide-binding</keyword>
<keyword id="KW-1185">Reference proteome</keyword>
<keyword id="KW-0694">RNA-binding</keyword>
<keyword id="KW-0784">Thiamine biosynthesis</keyword>
<keyword id="KW-0808">Transferase</keyword>
<keyword id="KW-0820">tRNA-binding</keyword>
<reference key="1">
    <citation type="journal article" date="2008" name="DNA Res.">
        <title>Comparative genome analysis of Lactobacillus reuteri and Lactobacillus fermentum reveal a genomic island for reuterin and cobalamin production.</title>
        <authorList>
            <person name="Morita H."/>
            <person name="Toh H."/>
            <person name="Fukuda S."/>
            <person name="Horikawa H."/>
            <person name="Oshima K."/>
            <person name="Suzuki T."/>
            <person name="Murakami M."/>
            <person name="Hisamatsu S."/>
            <person name="Kato Y."/>
            <person name="Takizawa T."/>
            <person name="Fukuoka H."/>
            <person name="Yoshimura T."/>
            <person name="Itoh K."/>
            <person name="O'Sullivan D.J."/>
            <person name="McKay L.L."/>
            <person name="Ohno H."/>
            <person name="Kikuchi J."/>
            <person name="Masaoka T."/>
            <person name="Hattori M."/>
        </authorList>
    </citation>
    <scope>NUCLEOTIDE SEQUENCE [LARGE SCALE GENOMIC DNA]</scope>
    <source>
        <strain>NBRC 3956 / LMG 18251</strain>
    </source>
</reference>
<sequence>MKYDEIMVRYGELSTKGHNKKSFIDRLGSNVRKALHQYDQVKIHPNQDRLHVELNGTDAEPVMERLKQVFGIQNFSPSLRVEKDFDSVVEAAVAIFKEQVQGPTTFKVETKRADHKFPMGTFEMNKQLGGALLKAFPTDLSVDVHHPDITLRVEIRLNGIYLTSAKILGAGGLPVGTAGKGMMMLSGGIDSPVAAYLALKRGVSLEMVHFYSPPYTSEQALAKAKELTGKLAKYSGSIKFIQVPFTEIQETVKEKVPEGYLMTVQRRLMLRLACALAQKRAGLAVFNGESLGQVASQTMESMLAIEDVTTMPVLRPVLSYDKNEIIKIAEDIDTYDLSILPYEDCCTVFTPPSPKTKPNLKRARSYEARLDVEGLMQRALDGIEITEIHAGDEFLNQNQDVFAELL</sequence>
<proteinExistence type="inferred from homology"/>
<evidence type="ECO:0000255" key="1">
    <source>
        <dbReference type="HAMAP-Rule" id="MF_00021"/>
    </source>
</evidence>
<feature type="chain" id="PRO_1000090019" description="Probable tRNA sulfurtransferase">
    <location>
        <begin position="1"/>
        <end position="406"/>
    </location>
</feature>
<feature type="domain" description="THUMP" evidence="1">
    <location>
        <begin position="60"/>
        <end position="166"/>
    </location>
</feature>
<feature type="binding site" evidence="1">
    <location>
        <begin position="184"/>
        <end position="185"/>
    </location>
    <ligand>
        <name>ATP</name>
        <dbReference type="ChEBI" id="CHEBI:30616"/>
    </ligand>
</feature>
<feature type="binding site" evidence="1">
    <location>
        <begin position="209"/>
        <end position="210"/>
    </location>
    <ligand>
        <name>ATP</name>
        <dbReference type="ChEBI" id="CHEBI:30616"/>
    </ligand>
</feature>
<feature type="binding site" evidence="1">
    <location>
        <position position="266"/>
    </location>
    <ligand>
        <name>ATP</name>
        <dbReference type="ChEBI" id="CHEBI:30616"/>
    </ligand>
</feature>
<feature type="binding site" evidence="1">
    <location>
        <position position="288"/>
    </location>
    <ligand>
        <name>ATP</name>
        <dbReference type="ChEBI" id="CHEBI:30616"/>
    </ligand>
</feature>
<feature type="binding site" evidence="1">
    <location>
        <position position="297"/>
    </location>
    <ligand>
        <name>ATP</name>
        <dbReference type="ChEBI" id="CHEBI:30616"/>
    </ligand>
</feature>
<accession>B2GAZ4</accession>